<gene>
    <name evidence="3" type="primary">nfeD1</name>
    <name type="synonym">yqeZ</name>
    <name type="ordered locus">BSU25390</name>
</gene>
<dbReference type="EMBL" id="D84432">
    <property type="protein sequence ID" value="BAA12472.1"/>
    <property type="molecule type" value="Genomic_DNA"/>
</dbReference>
<dbReference type="EMBL" id="AL009126">
    <property type="protein sequence ID" value="CAB14481.1"/>
    <property type="molecule type" value="Genomic_DNA"/>
</dbReference>
<dbReference type="PIR" id="H69952">
    <property type="entry name" value="H69952"/>
</dbReference>
<dbReference type="RefSeq" id="WP_003230024.1">
    <property type="nucleotide sequence ID" value="NZ_OZ025638.1"/>
</dbReference>
<dbReference type="SMR" id="P54465"/>
<dbReference type="FunCoup" id="P54465">
    <property type="interactions" value="10"/>
</dbReference>
<dbReference type="STRING" id="224308.BSU25390"/>
<dbReference type="PaxDb" id="224308-BSU25390"/>
<dbReference type="EnsemblBacteria" id="CAB14481">
    <property type="protein sequence ID" value="CAB14481"/>
    <property type="gene ID" value="BSU_25390"/>
</dbReference>
<dbReference type="GeneID" id="937859"/>
<dbReference type="KEGG" id="bsu:BSU25390"/>
<dbReference type="PATRIC" id="fig|224308.179.peg.2760"/>
<dbReference type="eggNOG" id="COG1030">
    <property type="taxonomic scope" value="Bacteria"/>
</dbReference>
<dbReference type="InParanoid" id="P54465"/>
<dbReference type="OrthoDB" id="9806253at2"/>
<dbReference type="PhylomeDB" id="P54465"/>
<dbReference type="BioCyc" id="BSUB:BSU25390-MONOMER"/>
<dbReference type="Proteomes" id="UP000001570">
    <property type="component" value="Chromosome"/>
</dbReference>
<dbReference type="GO" id="GO:0005886">
    <property type="term" value="C:plasma membrane"/>
    <property type="evidence" value="ECO:0000318"/>
    <property type="project" value="GO_Central"/>
</dbReference>
<dbReference type="CDD" id="cd07021">
    <property type="entry name" value="Clp_protease_NfeD_like"/>
    <property type="match status" value="1"/>
</dbReference>
<dbReference type="FunFam" id="2.40.50.140:FF:000336">
    <property type="entry name" value="Membrane-bound serine protease"/>
    <property type="match status" value="1"/>
</dbReference>
<dbReference type="Gene3D" id="3.90.226.10">
    <property type="entry name" value="2-enoyl-CoA Hydratase, Chain A, domain 1"/>
    <property type="match status" value="1"/>
</dbReference>
<dbReference type="Gene3D" id="2.40.50.140">
    <property type="entry name" value="Nucleic acid-binding proteins"/>
    <property type="match status" value="1"/>
</dbReference>
<dbReference type="InterPro" id="IPR029045">
    <property type="entry name" value="ClpP/crotonase-like_dom_sf"/>
</dbReference>
<dbReference type="InterPro" id="IPR052165">
    <property type="entry name" value="Membrane_assoc_protease"/>
</dbReference>
<dbReference type="InterPro" id="IPR012340">
    <property type="entry name" value="NA-bd_OB-fold"/>
</dbReference>
<dbReference type="InterPro" id="IPR002810">
    <property type="entry name" value="NfeD-like_C"/>
</dbReference>
<dbReference type="InterPro" id="IPR056738">
    <property type="entry name" value="NfeD1b_N"/>
</dbReference>
<dbReference type="InterPro" id="IPR056739">
    <property type="entry name" value="NfeD_membrane"/>
</dbReference>
<dbReference type="PANTHER" id="PTHR33507">
    <property type="entry name" value="INNER MEMBRANE PROTEIN YBBJ"/>
    <property type="match status" value="1"/>
</dbReference>
<dbReference type="PANTHER" id="PTHR33507:SF3">
    <property type="entry name" value="INNER MEMBRANE PROTEIN YBBJ"/>
    <property type="match status" value="1"/>
</dbReference>
<dbReference type="Pfam" id="PF01957">
    <property type="entry name" value="NfeD"/>
    <property type="match status" value="1"/>
</dbReference>
<dbReference type="Pfam" id="PF25145">
    <property type="entry name" value="NfeD1b_N"/>
    <property type="match status" value="1"/>
</dbReference>
<dbReference type="Pfam" id="PF24961">
    <property type="entry name" value="NfeD_membrane"/>
    <property type="match status" value="1"/>
</dbReference>
<dbReference type="SUPFAM" id="SSF52096">
    <property type="entry name" value="ClpP/crotonase"/>
    <property type="match status" value="1"/>
</dbReference>
<dbReference type="SUPFAM" id="SSF141322">
    <property type="entry name" value="NfeD domain-like"/>
    <property type="match status" value="1"/>
</dbReference>
<name>NFED1_BACSU</name>
<protein>
    <recommendedName>
        <fullName evidence="3">Membrane protein NfeD1b</fullName>
    </recommendedName>
</protein>
<proteinExistence type="inferred from homology"/>
<sequence>MLQIKGFRAALLGIFLLSLLGVQLNAKAEKQTVYVIPVEKNVEQGLASFLSRSLQDAKDAHADHIILDINTPGGLVKSAIDMADLITESEIPVTAYVNKRALSAGAYIALQADHIYMAPGGKMGAAAIVDGQGNAADQKAQSLWLAEMEDAAVKNNRDPKYALAMADPDIDAKEVGAPKGDLLTLNADKAIEVGYSEGTADNLSTLVKKLGFEKAQISYAKESFAEKTARWLTNPVIVPILLTIAFLGLTVELFSPGVGLPGTAGLIALLLFFYGHLAAGLAGYETVLLFIAGVILILLEIFLPGGIIGLLGLGAIIASLFLAAGSFTVMAVSLLIASAVSITAFILLTRVLGKRMKFFKKLILNDSTNTESGYVSNQTRTDLMGKVGITFTPLRPSGTVIIDDERLDVVSEGSFTEKDKKVKVIKVEGSRIVVREI</sequence>
<accession>P54465</accession>
<evidence type="ECO:0000255" key="1"/>
<evidence type="ECO:0000269" key="2">
    <source>
    </source>
</evidence>
<evidence type="ECO:0000303" key="3">
    <source>
    </source>
</evidence>
<evidence type="ECO:0000305" key="4"/>
<evidence type="ECO:0000305" key="5">
    <source>
    </source>
</evidence>
<organism>
    <name type="scientific">Bacillus subtilis (strain 168)</name>
    <dbReference type="NCBI Taxonomy" id="224308"/>
    <lineage>
        <taxon>Bacteria</taxon>
        <taxon>Bacillati</taxon>
        <taxon>Bacillota</taxon>
        <taxon>Bacilli</taxon>
        <taxon>Bacillales</taxon>
        <taxon>Bacillaceae</taxon>
        <taxon>Bacillus</taxon>
    </lineage>
</organism>
<keyword id="KW-1003">Cell membrane</keyword>
<keyword id="KW-0472">Membrane</keyword>
<keyword id="KW-1185">Reference proteome</keyword>
<keyword id="KW-0812">Transmembrane</keyword>
<keyword id="KW-1133">Transmembrane helix</keyword>
<feature type="chain" id="PRO_0000049792" description="Membrane protein NfeD1b">
    <location>
        <begin position="1"/>
        <end position="437"/>
    </location>
</feature>
<feature type="transmembrane region" description="Helical" evidence="1">
    <location>
        <begin position="2"/>
        <end position="22"/>
    </location>
</feature>
<feature type="transmembrane region" description="Helical" evidence="1">
    <location>
        <begin position="231"/>
        <end position="251"/>
    </location>
</feature>
<feature type="transmembrane region" description="Helical" evidence="1">
    <location>
        <begin position="253"/>
        <end position="273"/>
    </location>
</feature>
<feature type="transmembrane region" description="Helical" evidence="1">
    <location>
        <begin position="288"/>
        <end position="308"/>
    </location>
</feature>
<feature type="transmembrane region" description="Helical" evidence="1">
    <location>
        <begin position="316"/>
        <end position="336"/>
    </location>
</feature>
<comment type="subcellular location">
    <subcellularLocation>
        <location evidence="5">Cell membrane</location>
        <topology evidence="1">Multi-pass membrane protein</topology>
    </subcellularLocation>
</comment>
<comment type="disruption phenotype">
    <text evidence="2">No change in localization of FloA or FloT.</text>
</comment>
<comment type="similarity">
    <text evidence="4">Belongs to the NfeD family.</text>
</comment>
<reference key="1">
    <citation type="journal article" date="1996" name="Microbiology">
        <title>Systematic sequencing of the 283 kb 210 degrees-232 degrees region of the Bacillus subtilis genome containing the skin element and many sporulation genes.</title>
        <authorList>
            <person name="Mizuno M."/>
            <person name="Masuda S."/>
            <person name="Takemaru K."/>
            <person name="Hosono S."/>
            <person name="Sato T."/>
            <person name="Takeuchi M."/>
            <person name="Kobayashi Y."/>
        </authorList>
    </citation>
    <scope>NUCLEOTIDE SEQUENCE [GENOMIC DNA]</scope>
    <source>
        <strain>168 / JH642</strain>
    </source>
</reference>
<reference key="2">
    <citation type="journal article" date="1997" name="Nature">
        <title>The complete genome sequence of the Gram-positive bacterium Bacillus subtilis.</title>
        <authorList>
            <person name="Kunst F."/>
            <person name="Ogasawara N."/>
            <person name="Moszer I."/>
            <person name="Albertini A.M."/>
            <person name="Alloni G."/>
            <person name="Azevedo V."/>
            <person name="Bertero M.G."/>
            <person name="Bessieres P."/>
            <person name="Bolotin A."/>
            <person name="Borchert S."/>
            <person name="Borriss R."/>
            <person name="Boursier L."/>
            <person name="Brans A."/>
            <person name="Braun M."/>
            <person name="Brignell S.C."/>
            <person name="Bron S."/>
            <person name="Brouillet S."/>
            <person name="Bruschi C.V."/>
            <person name="Caldwell B."/>
            <person name="Capuano V."/>
            <person name="Carter N.M."/>
            <person name="Choi S.-K."/>
            <person name="Codani J.-J."/>
            <person name="Connerton I.F."/>
            <person name="Cummings N.J."/>
            <person name="Daniel R.A."/>
            <person name="Denizot F."/>
            <person name="Devine K.M."/>
            <person name="Duesterhoeft A."/>
            <person name="Ehrlich S.D."/>
            <person name="Emmerson P.T."/>
            <person name="Entian K.-D."/>
            <person name="Errington J."/>
            <person name="Fabret C."/>
            <person name="Ferrari E."/>
            <person name="Foulger D."/>
            <person name="Fritz C."/>
            <person name="Fujita M."/>
            <person name="Fujita Y."/>
            <person name="Fuma S."/>
            <person name="Galizzi A."/>
            <person name="Galleron N."/>
            <person name="Ghim S.-Y."/>
            <person name="Glaser P."/>
            <person name="Goffeau A."/>
            <person name="Golightly E.J."/>
            <person name="Grandi G."/>
            <person name="Guiseppi G."/>
            <person name="Guy B.J."/>
            <person name="Haga K."/>
            <person name="Haiech J."/>
            <person name="Harwood C.R."/>
            <person name="Henaut A."/>
            <person name="Hilbert H."/>
            <person name="Holsappel S."/>
            <person name="Hosono S."/>
            <person name="Hullo M.-F."/>
            <person name="Itaya M."/>
            <person name="Jones L.-M."/>
            <person name="Joris B."/>
            <person name="Karamata D."/>
            <person name="Kasahara Y."/>
            <person name="Klaerr-Blanchard M."/>
            <person name="Klein C."/>
            <person name="Kobayashi Y."/>
            <person name="Koetter P."/>
            <person name="Koningstein G."/>
            <person name="Krogh S."/>
            <person name="Kumano M."/>
            <person name="Kurita K."/>
            <person name="Lapidus A."/>
            <person name="Lardinois S."/>
            <person name="Lauber J."/>
            <person name="Lazarevic V."/>
            <person name="Lee S.-M."/>
            <person name="Levine A."/>
            <person name="Liu H."/>
            <person name="Masuda S."/>
            <person name="Mauel C."/>
            <person name="Medigue C."/>
            <person name="Medina N."/>
            <person name="Mellado R.P."/>
            <person name="Mizuno M."/>
            <person name="Moestl D."/>
            <person name="Nakai S."/>
            <person name="Noback M."/>
            <person name="Noone D."/>
            <person name="O'Reilly M."/>
            <person name="Ogawa K."/>
            <person name="Ogiwara A."/>
            <person name="Oudega B."/>
            <person name="Park S.-H."/>
            <person name="Parro V."/>
            <person name="Pohl T.M."/>
            <person name="Portetelle D."/>
            <person name="Porwollik S."/>
            <person name="Prescott A.M."/>
            <person name="Presecan E."/>
            <person name="Pujic P."/>
            <person name="Purnelle B."/>
            <person name="Rapoport G."/>
            <person name="Rey M."/>
            <person name="Reynolds S."/>
            <person name="Rieger M."/>
            <person name="Rivolta C."/>
            <person name="Rocha E."/>
            <person name="Roche B."/>
            <person name="Rose M."/>
            <person name="Sadaie Y."/>
            <person name="Sato T."/>
            <person name="Scanlan E."/>
            <person name="Schleich S."/>
            <person name="Schroeter R."/>
            <person name="Scoffone F."/>
            <person name="Sekiguchi J."/>
            <person name="Sekowska A."/>
            <person name="Seror S.J."/>
            <person name="Serror P."/>
            <person name="Shin B.-S."/>
            <person name="Soldo B."/>
            <person name="Sorokin A."/>
            <person name="Tacconi E."/>
            <person name="Takagi T."/>
            <person name="Takahashi H."/>
            <person name="Takemaru K."/>
            <person name="Takeuchi M."/>
            <person name="Tamakoshi A."/>
            <person name="Tanaka T."/>
            <person name="Terpstra P."/>
            <person name="Tognoni A."/>
            <person name="Tosato V."/>
            <person name="Uchiyama S."/>
            <person name="Vandenbol M."/>
            <person name="Vannier F."/>
            <person name="Vassarotti A."/>
            <person name="Viari A."/>
            <person name="Wambutt R."/>
            <person name="Wedler E."/>
            <person name="Wedler H."/>
            <person name="Weitzenegger T."/>
            <person name="Winters P."/>
            <person name="Wipat A."/>
            <person name="Yamamoto H."/>
            <person name="Yamane K."/>
            <person name="Yasumoto K."/>
            <person name="Yata K."/>
            <person name="Yoshida K."/>
            <person name="Yoshikawa H.-F."/>
            <person name="Zumstein E."/>
            <person name="Yoshikawa H."/>
            <person name="Danchin A."/>
        </authorList>
    </citation>
    <scope>NUCLEOTIDE SEQUENCE [LARGE SCALE GENOMIC DNA]</scope>
    <source>
        <strain>168</strain>
    </source>
</reference>
<reference key="3">
    <citation type="journal article" date="2012" name="J. Bacteriol.">
        <title>Synthetic motility and cell shape defects associated with deletions of flotillin/reggie paralogs in Bacillus subtilis and interplay of these proteins with NfeD proteins.</title>
        <authorList>
            <person name="Dempwolff F."/>
            <person name="Moeller H.M."/>
            <person name="Graumann P.L."/>
        </authorList>
    </citation>
    <scope>SUBCELLULAR LOCATION</scope>
    <scope>DISRUPTION PHENOTYPE</scope>
    <source>
        <strain>168 / PY79</strain>
    </source>
</reference>